<keyword id="KW-0067">ATP-binding</keyword>
<keyword id="KW-0963">Cytoplasm</keyword>
<keyword id="KW-0227">DNA damage</keyword>
<keyword id="KW-0233">DNA recombination</keyword>
<keyword id="KW-0234">DNA repair</keyword>
<keyword id="KW-0238">DNA-binding</keyword>
<keyword id="KW-0378">Hydrolase</keyword>
<keyword id="KW-0547">Nucleotide-binding</keyword>
<accession>A9LZC3</accession>
<comment type="function">
    <text evidence="1">The RuvA-RuvB-RuvC complex processes Holliday junction (HJ) DNA during genetic recombination and DNA repair, while the RuvA-RuvB complex plays an important role in the rescue of blocked DNA replication forks via replication fork reversal (RFR). RuvA specifically binds to HJ cruciform DNA, conferring on it an open structure. The RuvB hexamer acts as an ATP-dependent pump, pulling dsDNA into and through the RuvAB complex. RuvB forms 2 homohexamers on either side of HJ DNA bound by 1 or 2 RuvA tetramers; 4 subunits per hexamer contact DNA at a time. Coordinated motions by a converter formed by DNA-disengaged RuvB subunits stimulates ATP hydrolysis and nucleotide exchange. Immobilization of the converter enables RuvB to convert the ATP-contained energy into a lever motion, pulling 2 nucleotides of DNA out of the RuvA tetramer per ATP hydrolyzed, thus driving DNA branch migration. The RuvB motors rotate together with the DNA substrate, which together with the progressing nucleotide cycle form the mechanistic basis for DNA recombination by continuous HJ branch migration. Branch migration allows RuvC to scan DNA until it finds its consensus sequence, where it cleaves and resolves cruciform DNA.</text>
</comment>
<comment type="catalytic activity">
    <reaction evidence="1">
        <text>ATP + H2O = ADP + phosphate + H(+)</text>
        <dbReference type="Rhea" id="RHEA:13065"/>
        <dbReference type="ChEBI" id="CHEBI:15377"/>
        <dbReference type="ChEBI" id="CHEBI:15378"/>
        <dbReference type="ChEBI" id="CHEBI:30616"/>
        <dbReference type="ChEBI" id="CHEBI:43474"/>
        <dbReference type="ChEBI" id="CHEBI:456216"/>
    </reaction>
</comment>
<comment type="subunit">
    <text evidence="1">Homohexamer. Forms an RuvA(8)-RuvB(12)-Holliday junction (HJ) complex. HJ DNA is sandwiched between 2 RuvA tetramers; dsDNA enters through RuvA and exits via RuvB. An RuvB hexamer assembles on each DNA strand where it exits the tetramer. Each RuvB hexamer is contacted by two RuvA subunits (via domain III) on 2 adjacent RuvB subunits; this complex drives branch migration. In the full resolvosome a probable DNA-RuvA(4)-RuvB(12)-RuvC(2) complex forms which resolves the HJ.</text>
</comment>
<comment type="subcellular location">
    <subcellularLocation>
        <location evidence="1">Cytoplasm</location>
    </subcellularLocation>
</comment>
<comment type="domain">
    <text evidence="1">Has 3 domains, the large (RuvB-L) and small ATPase (RuvB-S) domains and the C-terminal head (RuvB-H) domain. The head domain binds DNA, while the ATPase domains jointly bind ATP, ADP or are empty depending on the state of the subunit in the translocation cycle. During a single DNA translocation step the structure of each domain remains the same, but their relative positions change.</text>
</comment>
<comment type="similarity">
    <text evidence="1">Belongs to the RuvB family.</text>
</comment>
<gene>
    <name evidence="1" type="primary">ruvB</name>
    <name type="ordered locus">NMCC_1124</name>
</gene>
<reference key="1">
    <citation type="journal article" date="2008" name="Genomics">
        <title>Characterization of ST-4821 complex, a unique Neisseria meningitidis clone.</title>
        <authorList>
            <person name="Peng J."/>
            <person name="Yang L."/>
            <person name="Yang F."/>
            <person name="Yang J."/>
            <person name="Yan Y."/>
            <person name="Nie H."/>
            <person name="Zhang X."/>
            <person name="Xiong Z."/>
            <person name="Jiang Y."/>
            <person name="Cheng F."/>
            <person name="Xu X."/>
            <person name="Chen S."/>
            <person name="Sun L."/>
            <person name="Li W."/>
            <person name="Shen Y."/>
            <person name="Shao Z."/>
            <person name="Liang X."/>
            <person name="Xu J."/>
            <person name="Jin Q."/>
        </authorList>
    </citation>
    <scope>NUCLEOTIDE SEQUENCE [LARGE SCALE GENOMIC DNA]</scope>
    <source>
        <strain>053442</strain>
    </source>
</reference>
<dbReference type="EC" id="3.6.4.-" evidence="1"/>
<dbReference type="EMBL" id="CP000381">
    <property type="protein sequence ID" value="ABX73299.1"/>
    <property type="molecule type" value="Genomic_DNA"/>
</dbReference>
<dbReference type="RefSeq" id="WP_002220958.1">
    <property type="nucleotide sequence ID" value="NC_010120.1"/>
</dbReference>
<dbReference type="SMR" id="A9LZC3"/>
<dbReference type="KEGG" id="nmn:NMCC_1124"/>
<dbReference type="HOGENOM" id="CLU_055599_1_0_4"/>
<dbReference type="Proteomes" id="UP000001177">
    <property type="component" value="Chromosome"/>
</dbReference>
<dbReference type="GO" id="GO:0005737">
    <property type="term" value="C:cytoplasm"/>
    <property type="evidence" value="ECO:0007669"/>
    <property type="project" value="UniProtKB-SubCell"/>
</dbReference>
<dbReference type="GO" id="GO:0048476">
    <property type="term" value="C:Holliday junction resolvase complex"/>
    <property type="evidence" value="ECO:0007669"/>
    <property type="project" value="UniProtKB-UniRule"/>
</dbReference>
<dbReference type="GO" id="GO:0005524">
    <property type="term" value="F:ATP binding"/>
    <property type="evidence" value="ECO:0007669"/>
    <property type="project" value="UniProtKB-UniRule"/>
</dbReference>
<dbReference type="GO" id="GO:0016887">
    <property type="term" value="F:ATP hydrolysis activity"/>
    <property type="evidence" value="ECO:0007669"/>
    <property type="project" value="InterPro"/>
</dbReference>
<dbReference type="GO" id="GO:0000400">
    <property type="term" value="F:four-way junction DNA binding"/>
    <property type="evidence" value="ECO:0007669"/>
    <property type="project" value="UniProtKB-UniRule"/>
</dbReference>
<dbReference type="GO" id="GO:0009378">
    <property type="term" value="F:four-way junction helicase activity"/>
    <property type="evidence" value="ECO:0007669"/>
    <property type="project" value="InterPro"/>
</dbReference>
<dbReference type="GO" id="GO:0006310">
    <property type="term" value="P:DNA recombination"/>
    <property type="evidence" value="ECO:0007669"/>
    <property type="project" value="UniProtKB-UniRule"/>
</dbReference>
<dbReference type="GO" id="GO:0006281">
    <property type="term" value="P:DNA repair"/>
    <property type="evidence" value="ECO:0007669"/>
    <property type="project" value="UniProtKB-UniRule"/>
</dbReference>
<dbReference type="CDD" id="cd00009">
    <property type="entry name" value="AAA"/>
    <property type="match status" value="1"/>
</dbReference>
<dbReference type="FunFam" id="1.10.10.10:FF:000086">
    <property type="entry name" value="Holliday junction ATP-dependent DNA helicase RuvB"/>
    <property type="match status" value="1"/>
</dbReference>
<dbReference type="FunFam" id="1.10.8.60:FF:000023">
    <property type="entry name" value="Holliday junction ATP-dependent DNA helicase RuvB"/>
    <property type="match status" value="1"/>
</dbReference>
<dbReference type="FunFam" id="3.40.50.300:FF:000073">
    <property type="entry name" value="Holliday junction ATP-dependent DNA helicase RuvB"/>
    <property type="match status" value="1"/>
</dbReference>
<dbReference type="Gene3D" id="1.10.8.60">
    <property type="match status" value="1"/>
</dbReference>
<dbReference type="Gene3D" id="3.40.50.300">
    <property type="entry name" value="P-loop containing nucleotide triphosphate hydrolases"/>
    <property type="match status" value="1"/>
</dbReference>
<dbReference type="Gene3D" id="1.10.10.10">
    <property type="entry name" value="Winged helix-like DNA-binding domain superfamily/Winged helix DNA-binding domain"/>
    <property type="match status" value="1"/>
</dbReference>
<dbReference type="HAMAP" id="MF_00016">
    <property type="entry name" value="DNA_HJ_migration_RuvB"/>
    <property type="match status" value="1"/>
</dbReference>
<dbReference type="InterPro" id="IPR003593">
    <property type="entry name" value="AAA+_ATPase"/>
</dbReference>
<dbReference type="InterPro" id="IPR041445">
    <property type="entry name" value="AAA_lid_4"/>
</dbReference>
<dbReference type="InterPro" id="IPR004605">
    <property type="entry name" value="DNA_helicase_Holl-junc_RuvB"/>
</dbReference>
<dbReference type="InterPro" id="IPR027417">
    <property type="entry name" value="P-loop_NTPase"/>
</dbReference>
<dbReference type="InterPro" id="IPR008824">
    <property type="entry name" value="RuvB-like_N"/>
</dbReference>
<dbReference type="InterPro" id="IPR008823">
    <property type="entry name" value="RuvB_C"/>
</dbReference>
<dbReference type="InterPro" id="IPR036388">
    <property type="entry name" value="WH-like_DNA-bd_sf"/>
</dbReference>
<dbReference type="InterPro" id="IPR036390">
    <property type="entry name" value="WH_DNA-bd_sf"/>
</dbReference>
<dbReference type="NCBIfam" id="NF000868">
    <property type="entry name" value="PRK00080.1"/>
    <property type="match status" value="1"/>
</dbReference>
<dbReference type="NCBIfam" id="TIGR00635">
    <property type="entry name" value="ruvB"/>
    <property type="match status" value="1"/>
</dbReference>
<dbReference type="PANTHER" id="PTHR42848">
    <property type="match status" value="1"/>
</dbReference>
<dbReference type="PANTHER" id="PTHR42848:SF1">
    <property type="entry name" value="HOLLIDAY JUNCTION BRANCH MIGRATION COMPLEX SUBUNIT RUVB"/>
    <property type="match status" value="1"/>
</dbReference>
<dbReference type="Pfam" id="PF17864">
    <property type="entry name" value="AAA_lid_4"/>
    <property type="match status" value="1"/>
</dbReference>
<dbReference type="Pfam" id="PF05491">
    <property type="entry name" value="RuvB_C"/>
    <property type="match status" value="1"/>
</dbReference>
<dbReference type="Pfam" id="PF05496">
    <property type="entry name" value="RuvB_N"/>
    <property type="match status" value="1"/>
</dbReference>
<dbReference type="SMART" id="SM00382">
    <property type="entry name" value="AAA"/>
    <property type="match status" value="1"/>
</dbReference>
<dbReference type="SUPFAM" id="SSF52540">
    <property type="entry name" value="P-loop containing nucleoside triphosphate hydrolases"/>
    <property type="match status" value="1"/>
</dbReference>
<dbReference type="SUPFAM" id="SSF46785">
    <property type="entry name" value="Winged helix' DNA-binding domain"/>
    <property type="match status" value="1"/>
</dbReference>
<name>RUVB_NEIM0</name>
<proteinExistence type="inferred from homology"/>
<protein>
    <recommendedName>
        <fullName evidence="1">Holliday junction branch migration complex subunit RuvB</fullName>
        <ecNumber evidence="1">3.6.4.-</ecNumber>
    </recommendedName>
</protein>
<sequence>MLQTDNLTAAQPQRIVAAQTASAQEELLERALRPKTLDDYIGQDKAKEQLAIFIQAAKKRGEALDHVLLFGPPGLGKTTLAHIIAKELGVNLRQTSGPVLERAGDLAALLTNLDPHDVLFIDEIHRLSPVVEEILYPALEDYRLDIMIGEGPAARSVKIDLPPFTLIGATTRAGMLTNPLRDRFGIVSRLEFYENRDLTTIVSRSAQLLQLDMSEEGAEEIAKRSRGTPRIANRLLRRVRDFADVKNNGTIDGGIADAALSMLDVDAQGLDVMDRKFLEAVLHKFGGGPVGLDNVAAAIGESTDTIEDVIEPYLIQQGFLQRTPRGRMATERAYLHFGLPVEK</sequence>
<evidence type="ECO:0000255" key="1">
    <source>
        <dbReference type="HAMAP-Rule" id="MF_00016"/>
    </source>
</evidence>
<organism>
    <name type="scientific">Neisseria meningitidis serogroup C (strain 053442)</name>
    <dbReference type="NCBI Taxonomy" id="374833"/>
    <lineage>
        <taxon>Bacteria</taxon>
        <taxon>Pseudomonadati</taxon>
        <taxon>Pseudomonadota</taxon>
        <taxon>Betaproteobacteria</taxon>
        <taxon>Neisseriales</taxon>
        <taxon>Neisseriaceae</taxon>
        <taxon>Neisseria</taxon>
    </lineage>
</organism>
<feature type="chain" id="PRO_1000074091" description="Holliday junction branch migration complex subunit RuvB">
    <location>
        <begin position="1"/>
        <end position="343"/>
    </location>
</feature>
<feature type="region of interest" description="Large ATPase domain (RuvB-L)" evidence="1">
    <location>
        <begin position="4"/>
        <end position="193"/>
    </location>
</feature>
<feature type="region of interest" description="Small ATPAse domain (RuvB-S)" evidence="1">
    <location>
        <begin position="194"/>
        <end position="264"/>
    </location>
</feature>
<feature type="region of interest" description="Head domain (RuvB-H)" evidence="1">
    <location>
        <begin position="267"/>
        <end position="343"/>
    </location>
</feature>
<feature type="binding site" evidence="1">
    <location>
        <position position="32"/>
    </location>
    <ligand>
        <name>ATP</name>
        <dbReference type="ChEBI" id="CHEBI:30616"/>
    </ligand>
</feature>
<feature type="binding site" evidence="1">
    <location>
        <position position="33"/>
    </location>
    <ligand>
        <name>ATP</name>
        <dbReference type="ChEBI" id="CHEBI:30616"/>
    </ligand>
</feature>
<feature type="binding site" evidence="1">
    <location>
        <position position="74"/>
    </location>
    <ligand>
        <name>ATP</name>
        <dbReference type="ChEBI" id="CHEBI:30616"/>
    </ligand>
</feature>
<feature type="binding site" evidence="1">
    <location>
        <position position="77"/>
    </location>
    <ligand>
        <name>ATP</name>
        <dbReference type="ChEBI" id="CHEBI:30616"/>
    </ligand>
</feature>
<feature type="binding site" evidence="1">
    <location>
        <position position="78"/>
    </location>
    <ligand>
        <name>ATP</name>
        <dbReference type="ChEBI" id="CHEBI:30616"/>
    </ligand>
</feature>
<feature type="binding site" evidence="1">
    <location>
        <position position="78"/>
    </location>
    <ligand>
        <name>Mg(2+)</name>
        <dbReference type="ChEBI" id="CHEBI:18420"/>
    </ligand>
</feature>
<feature type="binding site" evidence="1">
    <location>
        <position position="79"/>
    </location>
    <ligand>
        <name>ATP</name>
        <dbReference type="ChEBI" id="CHEBI:30616"/>
    </ligand>
</feature>
<feature type="binding site" evidence="1">
    <location>
        <begin position="140"/>
        <end position="142"/>
    </location>
    <ligand>
        <name>ATP</name>
        <dbReference type="ChEBI" id="CHEBI:30616"/>
    </ligand>
</feature>
<feature type="binding site" evidence="1">
    <location>
        <position position="183"/>
    </location>
    <ligand>
        <name>ATP</name>
        <dbReference type="ChEBI" id="CHEBI:30616"/>
    </ligand>
</feature>
<feature type="binding site" evidence="1">
    <location>
        <position position="193"/>
    </location>
    <ligand>
        <name>ATP</name>
        <dbReference type="ChEBI" id="CHEBI:30616"/>
    </ligand>
</feature>
<feature type="binding site" evidence="1">
    <location>
        <position position="230"/>
    </location>
    <ligand>
        <name>ATP</name>
        <dbReference type="ChEBI" id="CHEBI:30616"/>
    </ligand>
</feature>
<feature type="binding site" evidence="1">
    <location>
        <position position="322"/>
    </location>
    <ligand>
        <name>DNA</name>
        <dbReference type="ChEBI" id="CHEBI:16991"/>
    </ligand>
</feature>
<feature type="binding site" evidence="1">
    <location>
        <position position="327"/>
    </location>
    <ligand>
        <name>DNA</name>
        <dbReference type="ChEBI" id="CHEBI:16991"/>
    </ligand>
</feature>